<feature type="chain" id="PRO_0000166184" description="Iron-sulfur cluster assembly scaffold protein IscU">
    <location>
        <begin position="1"/>
        <end position="128"/>
    </location>
</feature>
<feature type="mutagenesis site" description="Stabilizes apo-protein in the S-state (structured)." evidence="2 3">
    <original>D</original>
    <variation>A</variation>
    <variation>L</variation>
    <variation>V</variation>
    <location>
        <position position="39"/>
    </location>
</feature>
<feature type="mutagenesis site" description="No effect on equilibrium between S- and D-state (disordered)." evidence="2 3">
    <original>D</original>
    <variation>G</variation>
    <location>
        <position position="39"/>
    </location>
</feature>
<feature type="mutagenesis site" description="Stabilizes apo-protein in the D-state; Fe-S cluster assembly 3-fold slower than wild-type." evidence="2">
    <original>K</original>
    <variation>A</variation>
    <location>
        <position position="89"/>
    </location>
</feature>
<feature type="mutagenesis site" description="Stabilizes apo-protein in the S-state; biphasic Fe-S cluster assembly 7-fold slower than wild-type." evidence="2 3">
    <original>N</original>
    <variation>A</variation>
    <location>
        <position position="90"/>
    </location>
</feature>
<feature type="mutagenesis site" description="Stabilizes apo-protein in the D-state; Fe-S cluster assembly 3-fold slower than wild-type." evidence="2 3">
    <original>N</original>
    <variation>D</variation>
    <location>
        <position position="90"/>
    </location>
</feature>
<feature type="mutagenesis site" description="Stabilizes apo-protein in the S-state; biphasic Fe-S cluster assembly 7-fold slower than wild-type." evidence="2 3">
    <original>S</original>
    <variation>A</variation>
    <location>
        <position position="107"/>
    </location>
</feature>
<feature type="mutagenesis site" description="Stabilizes apo-protein in the S-state; biphasic Fe-S cluster assembly 7-fold slower than wild-type." evidence="2 3">
    <original>E</original>
    <variation>A</variation>
    <location>
        <position position="111"/>
    </location>
</feature>
<feature type="strand" evidence="5">
    <location>
        <begin position="11"/>
        <end position="13"/>
    </location>
</feature>
<feature type="strand" evidence="6">
    <location>
        <begin position="18"/>
        <end position="22"/>
    </location>
</feature>
<feature type="strand" evidence="6">
    <location>
        <begin position="25"/>
        <end position="27"/>
    </location>
</feature>
<feature type="strand" evidence="5">
    <location>
        <begin position="29"/>
        <end position="34"/>
    </location>
</feature>
<feature type="turn" evidence="5">
    <location>
        <begin position="35"/>
        <end position="38"/>
    </location>
</feature>
<feature type="strand" evidence="5">
    <location>
        <begin position="39"/>
        <end position="47"/>
    </location>
</feature>
<feature type="strand" evidence="5">
    <location>
        <begin position="52"/>
        <end position="59"/>
    </location>
</feature>
<feature type="strand" evidence="5">
    <location>
        <begin position="62"/>
        <end position="65"/>
    </location>
</feature>
<feature type="helix" evidence="5">
    <location>
        <begin position="68"/>
        <end position="77"/>
    </location>
</feature>
<feature type="helix" evidence="5">
    <location>
        <begin position="82"/>
        <end position="87"/>
    </location>
</feature>
<feature type="helix" evidence="5">
    <location>
        <begin position="90"/>
        <end position="97"/>
    </location>
</feature>
<feature type="turn" evidence="6">
    <location>
        <begin position="102"/>
        <end position="104"/>
    </location>
</feature>
<feature type="helix" evidence="5">
    <location>
        <begin position="105"/>
        <end position="126"/>
    </location>
</feature>
<proteinExistence type="evidence at protein level"/>
<accession>P0ACD4</accession>
<accession>P77310</accession>
<evidence type="ECO:0000269" key="1">
    <source>
    </source>
</evidence>
<evidence type="ECO:0000269" key="2">
    <source>
    </source>
</evidence>
<evidence type="ECO:0000269" key="3">
    <source>
    </source>
</evidence>
<evidence type="ECO:0000305" key="4"/>
<evidence type="ECO:0007829" key="5">
    <source>
        <dbReference type="PDB" id="2KQK"/>
    </source>
</evidence>
<evidence type="ECO:0007829" key="6">
    <source>
        <dbReference type="PDB" id="2L4X"/>
    </source>
</evidence>
<gene>
    <name type="primary">iscU</name>
    <name type="synonym">nifU</name>
    <name type="synonym">yfhN</name>
    <name type="ordered locus">b2529</name>
    <name type="ordered locus">JW2513</name>
</gene>
<organism>
    <name type="scientific">Escherichia coli (strain K12)</name>
    <dbReference type="NCBI Taxonomy" id="83333"/>
    <lineage>
        <taxon>Bacteria</taxon>
        <taxon>Pseudomonadati</taxon>
        <taxon>Pseudomonadota</taxon>
        <taxon>Gammaproteobacteria</taxon>
        <taxon>Enterobacterales</taxon>
        <taxon>Enterobacteriaceae</taxon>
        <taxon>Escherichia</taxon>
    </lineage>
</organism>
<keyword id="KW-0002">3D-structure</keyword>
<keyword id="KW-1185">Reference proteome</keyword>
<protein>
    <recommendedName>
        <fullName>Iron-sulfur cluster assembly scaffold protein IscU</fullName>
    </recommendedName>
    <alternativeName>
        <fullName>Sulfur acceptor protein IscU</fullName>
    </alternativeName>
</protein>
<reference key="1">
    <citation type="journal article" date="1997" name="DNA Res.">
        <title>Construction of a contiguous 874-kb sequence of the Escherichia coli-K12 genome corresponding to 50.0-68.8 min on the linkage map and analysis of its sequence features.</title>
        <authorList>
            <person name="Yamamoto Y."/>
            <person name="Aiba H."/>
            <person name="Baba T."/>
            <person name="Hayashi K."/>
            <person name="Inada T."/>
            <person name="Isono K."/>
            <person name="Itoh T."/>
            <person name="Kimura S."/>
            <person name="Kitagawa M."/>
            <person name="Makino K."/>
            <person name="Miki T."/>
            <person name="Mitsuhashi N."/>
            <person name="Mizobuchi K."/>
            <person name="Mori H."/>
            <person name="Nakade S."/>
            <person name="Nakamura Y."/>
            <person name="Nashimoto H."/>
            <person name="Oshima T."/>
            <person name="Oyama S."/>
            <person name="Saito N."/>
            <person name="Sampei G."/>
            <person name="Satoh Y."/>
            <person name="Sivasundaram S."/>
            <person name="Tagami H."/>
            <person name="Takahashi H."/>
            <person name="Takeda J."/>
            <person name="Takemoto K."/>
            <person name="Uehara K."/>
            <person name="Wada C."/>
            <person name="Yamagata S."/>
            <person name="Horiuchi T."/>
        </authorList>
    </citation>
    <scope>NUCLEOTIDE SEQUENCE [LARGE SCALE GENOMIC DNA]</scope>
    <source>
        <strain>K12 / W3110 / ATCC 27325 / DSM 5911</strain>
    </source>
</reference>
<reference key="2">
    <citation type="journal article" date="1997" name="Science">
        <title>The complete genome sequence of Escherichia coli K-12.</title>
        <authorList>
            <person name="Blattner F.R."/>
            <person name="Plunkett G. III"/>
            <person name="Bloch C.A."/>
            <person name="Perna N.T."/>
            <person name="Burland V."/>
            <person name="Riley M."/>
            <person name="Collado-Vides J."/>
            <person name="Glasner J.D."/>
            <person name="Rode C.K."/>
            <person name="Mayhew G.F."/>
            <person name="Gregor J."/>
            <person name="Davis N.W."/>
            <person name="Kirkpatrick H.A."/>
            <person name="Goeden M.A."/>
            <person name="Rose D.J."/>
            <person name="Mau B."/>
            <person name="Shao Y."/>
        </authorList>
    </citation>
    <scope>NUCLEOTIDE SEQUENCE [LARGE SCALE GENOMIC DNA]</scope>
    <source>
        <strain>K12 / MG1655 / ATCC 47076</strain>
    </source>
</reference>
<reference key="3">
    <citation type="journal article" date="2006" name="Mol. Syst. Biol.">
        <title>Highly accurate genome sequences of Escherichia coli K-12 strains MG1655 and W3110.</title>
        <authorList>
            <person name="Hayashi K."/>
            <person name="Morooka N."/>
            <person name="Yamamoto Y."/>
            <person name="Fujita K."/>
            <person name="Isono K."/>
            <person name="Choi S."/>
            <person name="Ohtsubo E."/>
            <person name="Baba T."/>
            <person name="Wanner B.L."/>
            <person name="Mori H."/>
            <person name="Horiuchi T."/>
        </authorList>
    </citation>
    <scope>NUCLEOTIDE SEQUENCE [LARGE SCALE GENOMIC DNA]</scope>
    <source>
        <strain>K12 / W3110 / ATCC 27325 / DSM 5911</strain>
    </source>
</reference>
<reference key="4">
    <citation type="journal article" date="2001" name="J. Biol. Chem.">
        <title>Transfer of sulfur from IscS to IscU during Fe/S cluster assembly.</title>
        <authorList>
            <person name="Urbina H.D."/>
            <person name="Silberg J.J."/>
            <person name="Hoff K.G."/>
            <person name="Vickery L.E."/>
        </authorList>
    </citation>
    <scope>FUNCTION AS A SULFUR ACCEPTOR</scope>
    <scope>INTERACTION WITH ISCS</scope>
    <scope>ACTIVITY REGULATION</scope>
    <scope>SUBUNIT</scope>
</reference>
<reference key="5">
    <citation type="journal article" date="2012" name="Proc. Natl. Acad. Sci. U.S.A.">
        <title>Disordered form of the scaffold protein IscU is the substrate for iron-sulfur cluster assembly on cysteine desulfurase.</title>
        <authorList>
            <person name="Kim J.H."/>
            <person name="Tonelli M."/>
            <person name="Markley J.L."/>
        </authorList>
    </citation>
    <scope>FUNCTION</scope>
    <scope>SUBUNIT</scope>
    <scope>MUTAGENESIS OF ASP-39; LYS-89; ASN-90; SER-107 AND GLU-111</scope>
</reference>
<reference key="6">
    <citation type="journal article" date="2012" name="Biochemistry">
        <title>Three-dimensional structure and determinants of stability of the iron-sulfur cluster scaffold protein IscU from Escherichia coli.</title>
        <authorList>
            <person name="Kim J.H."/>
            <person name="Tonelli M."/>
            <person name="Kim T."/>
            <person name="Markley J.L."/>
        </authorList>
    </citation>
    <scope>STRUCTURE BY NMR OF APO-PROTEIN</scope>
    <scope>MUTAGENESIS OF ASP-39; ASN-90; SER-107 AND GLU-111</scope>
</reference>
<dbReference type="EMBL" id="U00096">
    <property type="protein sequence ID" value="AAC75582.1"/>
    <property type="molecule type" value="Genomic_DNA"/>
</dbReference>
<dbReference type="EMBL" id="AP009048">
    <property type="protein sequence ID" value="BAA16423.1"/>
    <property type="molecule type" value="Genomic_DNA"/>
</dbReference>
<dbReference type="PIR" id="H65029">
    <property type="entry name" value="H65029"/>
</dbReference>
<dbReference type="RefSeq" id="NP_417024.1">
    <property type="nucleotide sequence ID" value="NC_000913.3"/>
</dbReference>
<dbReference type="RefSeq" id="WP_000331707.1">
    <property type="nucleotide sequence ID" value="NZ_STEB01000011.1"/>
</dbReference>
<dbReference type="PDB" id="2KQK">
    <property type="method" value="NMR"/>
    <property type="chains" value="A=1-128"/>
</dbReference>
<dbReference type="PDB" id="2L4X">
    <property type="method" value="NMR"/>
    <property type="chains" value="A=1-128"/>
</dbReference>
<dbReference type="PDBsum" id="2KQK"/>
<dbReference type="PDBsum" id="2L4X"/>
<dbReference type="BMRB" id="P0ACD4"/>
<dbReference type="SASBDB" id="P0ACD4"/>
<dbReference type="SMR" id="P0ACD4"/>
<dbReference type="BioGRID" id="4259432">
    <property type="interactions" value="67"/>
</dbReference>
<dbReference type="BioGRID" id="851341">
    <property type="interactions" value="5"/>
</dbReference>
<dbReference type="ComplexPortal" id="CPX-2141">
    <property type="entry name" value="iscS-iscU iron-sulfur cluster assembly complex"/>
</dbReference>
<dbReference type="DIP" id="DIP-48025N"/>
<dbReference type="FunCoup" id="P0ACD4">
    <property type="interactions" value="717"/>
</dbReference>
<dbReference type="IntAct" id="P0ACD4">
    <property type="interactions" value="17"/>
</dbReference>
<dbReference type="STRING" id="511145.b2529"/>
<dbReference type="jPOST" id="P0ACD4"/>
<dbReference type="PaxDb" id="511145-b2529"/>
<dbReference type="EnsemblBacteria" id="AAC75582">
    <property type="protein sequence ID" value="AAC75582"/>
    <property type="gene ID" value="b2529"/>
</dbReference>
<dbReference type="GeneID" id="93774607"/>
<dbReference type="GeneID" id="947002"/>
<dbReference type="KEGG" id="ecj:JW2513"/>
<dbReference type="KEGG" id="eco:b2529"/>
<dbReference type="KEGG" id="ecoc:C3026_14015"/>
<dbReference type="PATRIC" id="fig|1411691.4.peg.4205"/>
<dbReference type="EchoBASE" id="EB3176"/>
<dbReference type="eggNOG" id="COG0822">
    <property type="taxonomic scope" value="Bacteria"/>
</dbReference>
<dbReference type="HOGENOM" id="CLU_079283_5_0_6"/>
<dbReference type="InParanoid" id="P0ACD4"/>
<dbReference type="OMA" id="SMVTEMV"/>
<dbReference type="OrthoDB" id="9808097at2"/>
<dbReference type="PhylomeDB" id="P0ACD4"/>
<dbReference type="BioCyc" id="EcoCyc:G7324-MONOMER"/>
<dbReference type="BioCyc" id="MetaCyc:G7324-MONOMER"/>
<dbReference type="EvolutionaryTrace" id="P0ACD4"/>
<dbReference type="PRO" id="PR:P0ACD4"/>
<dbReference type="Proteomes" id="UP000000625">
    <property type="component" value="Chromosome"/>
</dbReference>
<dbReference type="GO" id="GO:0005737">
    <property type="term" value="C:cytoplasm"/>
    <property type="evidence" value="ECO:0000318"/>
    <property type="project" value="GO_Central"/>
</dbReference>
<dbReference type="GO" id="GO:0005829">
    <property type="term" value="C:cytosol"/>
    <property type="evidence" value="ECO:0000314"/>
    <property type="project" value="EcoCyc"/>
</dbReference>
<dbReference type="GO" id="GO:1990330">
    <property type="term" value="C:IscS-IscU complex"/>
    <property type="evidence" value="ECO:0000303"/>
    <property type="project" value="ComplexPortal"/>
</dbReference>
<dbReference type="GO" id="GO:0051537">
    <property type="term" value="F:2 iron, 2 sulfur cluster binding"/>
    <property type="evidence" value="ECO:0000314"/>
    <property type="project" value="EcoCyc"/>
</dbReference>
<dbReference type="GO" id="GO:0051539">
    <property type="term" value="F:4 iron, 4 sulfur cluster binding"/>
    <property type="evidence" value="ECO:0000314"/>
    <property type="project" value="EcoCyc"/>
</dbReference>
<dbReference type="GO" id="GO:0005507">
    <property type="term" value="F:copper ion binding"/>
    <property type="evidence" value="ECO:0000314"/>
    <property type="project" value="EcoCyc"/>
</dbReference>
<dbReference type="GO" id="GO:0008198">
    <property type="term" value="F:ferrous iron binding"/>
    <property type="evidence" value="ECO:0000318"/>
    <property type="project" value="GO_Central"/>
</dbReference>
<dbReference type="GO" id="GO:0042802">
    <property type="term" value="F:identical protein binding"/>
    <property type="evidence" value="ECO:0000353"/>
    <property type="project" value="IntAct"/>
</dbReference>
<dbReference type="GO" id="GO:0008270">
    <property type="term" value="F:zinc ion binding"/>
    <property type="evidence" value="ECO:0000314"/>
    <property type="project" value="EcoCyc"/>
</dbReference>
<dbReference type="GO" id="GO:0006879">
    <property type="term" value="P:intracellular iron ion homeostasis"/>
    <property type="evidence" value="ECO:0000318"/>
    <property type="project" value="GO_Central"/>
</dbReference>
<dbReference type="GO" id="GO:0016226">
    <property type="term" value="P:iron-sulfur cluster assembly"/>
    <property type="evidence" value="ECO:0000314"/>
    <property type="project" value="EcoCyc"/>
</dbReference>
<dbReference type="GO" id="GO:0019448">
    <property type="term" value="P:L-cysteine catabolic process"/>
    <property type="evidence" value="ECO:0000303"/>
    <property type="project" value="ComplexPortal"/>
</dbReference>
<dbReference type="CDD" id="cd06664">
    <property type="entry name" value="IscU_like"/>
    <property type="match status" value="1"/>
</dbReference>
<dbReference type="FunFam" id="3.90.1010.10:FF:000001">
    <property type="entry name" value="Iron-sulfur cluster assembly scaffold protein IscU"/>
    <property type="match status" value="1"/>
</dbReference>
<dbReference type="Gene3D" id="3.90.1010.10">
    <property type="match status" value="1"/>
</dbReference>
<dbReference type="InterPro" id="IPR011339">
    <property type="entry name" value="ISCU"/>
</dbReference>
<dbReference type="InterPro" id="IPR002871">
    <property type="entry name" value="NIF_FeS_clus_asmbl_NifU_N"/>
</dbReference>
<dbReference type="NCBIfam" id="TIGR01999">
    <property type="entry name" value="iscU"/>
    <property type="match status" value="1"/>
</dbReference>
<dbReference type="PANTHER" id="PTHR10093">
    <property type="entry name" value="IRON-SULFUR CLUSTER ASSEMBLY ENZYME NIFU HOMOLOG"/>
    <property type="match status" value="1"/>
</dbReference>
<dbReference type="Pfam" id="PF01592">
    <property type="entry name" value="NifU_N"/>
    <property type="match status" value="1"/>
</dbReference>
<dbReference type="SUPFAM" id="SSF82649">
    <property type="entry name" value="SufE/NifU"/>
    <property type="match status" value="1"/>
</dbReference>
<comment type="function">
    <text evidence="1 2">A scaffold on which IscS assembles Fe-S clusters. Exists as 2 interconverting forms, a structured (S) and disordered (D) form. The D-state is the preferred substrate for IscS. Converts to the S-state when an Fe-S cluster is assembled, which helps it dissociate from IscS to transfer the Fe-S to an acceptor. It is likely that Fe-S cluster coordination is flexible as the role of this complex is to build and then hand off Fe-S clusters.</text>
</comment>
<comment type="activity regulation">
    <text evidence="1">Carboxymethylation by iodoacetic acid blocks sulfur transfer to this protein.</text>
</comment>
<comment type="subunit">
    <text evidence="1 2">Homodimer. Forms a heterotetramer with IscS; each subunit of the IscS dimer contacts an IscU monomer.</text>
</comment>
<comment type="interaction">
    <interactant intactId="EBI-561646">
        <id>P0ACD4</id>
    </interactant>
    <interactant intactId="EBI-550055">
        <id>P0A6B7</id>
        <label>iscS</label>
    </interactant>
    <organismsDiffer>false</organismsDiffer>
    <experiments>12</experiments>
</comment>
<comment type="interaction">
    <interactant intactId="EBI-561646">
        <id>P0ACD4</id>
    </interactant>
    <interactant intactId="EBI-561646">
        <id>P0ACD4</id>
        <label>iscU</label>
    </interactant>
    <organismsDiffer>false</organismsDiffer>
    <experiments>5</experiments>
</comment>
<comment type="similarity">
    <text evidence="4">Belongs to the NifU family.</text>
</comment>
<name>ISCU_ECOLI</name>
<sequence length="128" mass="13849">MAYSEKVIDHYENPRNVGSFDNNDENVGSGMVGAPACGDVMKLQIKVNDEGIIEDARFKTYGCGSAIASSSLVTEWVKGKSLDEAQAIKNTDIAEELELPPVKIHCSILAEDAIKAAIADYKSKREAK</sequence>